<reference key="1">
    <citation type="submission" date="2007-05" db="EMBL/GenBank/DDBJ databases">
        <title>Complete sequence of Geobacter uraniireducens Rf4.</title>
        <authorList>
            <consortium name="US DOE Joint Genome Institute"/>
            <person name="Copeland A."/>
            <person name="Lucas S."/>
            <person name="Lapidus A."/>
            <person name="Barry K."/>
            <person name="Detter J.C."/>
            <person name="Glavina del Rio T."/>
            <person name="Hammon N."/>
            <person name="Israni S."/>
            <person name="Dalin E."/>
            <person name="Tice H."/>
            <person name="Pitluck S."/>
            <person name="Chertkov O."/>
            <person name="Brettin T."/>
            <person name="Bruce D."/>
            <person name="Han C."/>
            <person name="Schmutz J."/>
            <person name="Larimer F."/>
            <person name="Land M."/>
            <person name="Hauser L."/>
            <person name="Kyrpides N."/>
            <person name="Mikhailova N."/>
            <person name="Shelobolina E."/>
            <person name="Aklujkar M."/>
            <person name="Lovley D."/>
            <person name="Richardson P."/>
        </authorList>
    </citation>
    <scope>NUCLEOTIDE SEQUENCE [LARGE SCALE GENOMIC DNA]</scope>
    <source>
        <strain>ATCC BAA-1134 / JCM 13001 / Rf4</strain>
    </source>
</reference>
<proteinExistence type="inferred from homology"/>
<organism>
    <name type="scientific">Geotalea uraniireducens (strain Rf4)</name>
    <name type="common">Geobacter uraniireducens</name>
    <dbReference type="NCBI Taxonomy" id="351605"/>
    <lineage>
        <taxon>Bacteria</taxon>
        <taxon>Pseudomonadati</taxon>
        <taxon>Thermodesulfobacteriota</taxon>
        <taxon>Desulfuromonadia</taxon>
        <taxon>Geobacterales</taxon>
        <taxon>Geobacteraceae</taxon>
        <taxon>Geotalea</taxon>
    </lineage>
</organism>
<gene>
    <name evidence="1" type="primary">pgk</name>
    <name type="ordered locus">Gura_2060</name>
</gene>
<accession>A5G382</accession>
<evidence type="ECO:0000255" key="1">
    <source>
        <dbReference type="HAMAP-Rule" id="MF_00145"/>
    </source>
</evidence>
<keyword id="KW-0067">ATP-binding</keyword>
<keyword id="KW-0963">Cytoplasm</keyword>
<keyword id="KW-0324">Glycolysis</keyword>
<keyword id="KW-0418">Kinase</keyword>
<keyword id="KW-0547">Nucleotide-binding</keyword>
<keyword id="KW-1185">Reference proteome</keyword>
<keyword id="KW-0808">Transferase</keyword>
<protein>
    <recommendedName>
        <fullName evidence="1">Phosphoglycerate kinase</fullName>
        <ecNumber evidence="1">2.7.2.3</ecNumber>
    </recommendedName>
</protein>
<sequence>MSIRYIDEISDLREKKIFMRVDFNVPLDEHQNITEDTRIRAVLPTINYALDYNAKVVLASHLGRPKGERNAKYSMAPAAKRLSRLLGKEVKLAPDCIGDGVSKIIDSMQPGDVVMLENLRFYPGEEKNDDDFAKALADHCDIYVNDAFAVSHRAHASVEAITKFFPIVAAGFLMKNEMSYFEKSMKNPIRPLVAILGGAKVSGKLEVLENLCNKVDKVIIGGGMAFTFLKALGYNVGKSLVEENLLETALNTYNKAREKGIKFYLPVDCVVADQFNPAAETKVTTIQEIPEGWMALDIGPATVTLFSTALQNAKTIVWNGPMGVFEMDAFSRGTFAMVSAVANSYALTIVGGGDTDVAVHRAGEYAKISYISTGGGAFLELLEGKKLPGIKVLEDNGHK</sequence>
<feature type="chain" id="PRO_1000076589" description="Phosphoglycerate kinase">
    <location>
        <begin position="1"/>
        <end position="399"/>
    </location>
</feature>
<feature type="binding site" evidence="1">
    <location>
        <begin position="22"/>
        <end position="24"/>
    </location>
    <ligand>
        <name>substrate</name>
    </ligand>
</feature>
<feature type="binding site" evidence="1">
    <location>
        <position position="38"/>
    </location>
    <ligand>
        <name>substrate</name>
    </ligand>
</feature>
<feature type="binding site" evidence="1">
    <location>
        <begin position="61"/>
        <end position="64"/>
    </location>
    <ligand>
        <name>substrate</name>
    </ligand>
</feature>
<feature type="binding site" evidence="1">
    <location>
        <position position="120"/>
    </location>
    <ligand>
        <name>substrate</name>
    </ligand>
</feature>
<feature type="binding site" evidence="1">
    <location>
        <position position="153"/>
    </location>
    <ligand>
        <name>substrate</name>
    </ligand>
</feature>
<feature type="binding site" evidence="1">
    <location>
        <position position="204"/>
    </location>
    <ligand>
        <name>ATP</name>
        <dbReference type="ChEBI" id="CHEBI:30616"/>
    </ligand>
</feature>
<feature type="binding site" evidence="1">
    <location>
        <position position="326"/>
    </location>
    <ligand>
        <name>ATP</name>
        <dbReference type="ChEBI" id="CHEBI:30616"/>
    </ligand>
</feature>
<feature type="binding site" evidence="1">
    <location>
        <begin position="352"/>
        <end position="355"/>
    </location>
    <ligand>
        <name>ATP</name>
        <dbReference type="ChEBI" id="CHEBI:30616"/>
    </ligand>
</feature>
<dbReference type="EC" id="2.7.2.3" evidence="1"/>
<dbReference type="EMBL" id="CP000698">
    <property type="protein sequence ID" value="ABQ26250.1"/>
    <property type="molecule type" value="Genomic_DNA"/>
</dbReference>
<dbReference type="RefSeq" id="WP_011938952.1">
    <property type="nucleotide sequence ID" value="NC_009483.1"/>
</dbReference>
<dbReference type="SMR" id="A5G382"/>
<dbReference type="STRING" id="351605.Gura_2060"/>
<dbReference type="KEGG" id="gur:Gura_2060"/>
<dbReference type="HOGENOM" id="CLU_025427_0_2_7"/>
<dbReference type="OrthoDB" id="9808460at2"/>
<dbReference type="UniPathway" id="UPA00109">
    <property type="reaction ID" value="UER00185"/>
</dbReference>
<dbReference type="Proteomes" id="UP000006695">
    <property type="component" value="Chromosome"/>
</dbReference>
<dbReference type="GO" id="GO:0005829">
    <property type="term" value="C:cytosol"/>
    <property type="evidence" value="ECO:0007669"/>
    <property type="project" value="TreeGrafter"/>
</dbReference>
<dbReference type="GO" id="GO:0043531">
    <property type="term" value="F:ADP binding"/>
    <property type="evidence" value="ECO:0007669"/>
    <property type="project" value="TreeGrafter"/>
</dbReference>
<dbReference type="GO" id="GO:0005524">
    <property type="term" value="F:ATP binding"/>
    <property type="evidence" value="ECO:0007669"/>
    <property type="project" value="UniProtKB-KW"/>
</dbReference>
<dbReference type="GO" id="GO:0004618">
    <property type="term" value="F:phosphoglycerate kinase activity"/>
    <property type="evidence" value="ECO:0007669"/>
    <property type="project" value="UniProtKB-UniRule"/>
</dbReference>
<dbReference type="GO" id="GO:0006094">
    <property type="term" value="P:gluconeogenesis"/>
    <property type="evidence" value="ECO:0007669"/>
    <property type="project" value="TreeGrafter"/>
</dbReference>
<dbReference type="GO" id="GO:0006096">
    <property type="term" value="P:glycolytic process"/>
    <property type="evidence" value="ECO:0007669"/>
    <property type="project" value="UniProtKB-UniRule"/>
</dbReference>
<dbReference type="CDD" id="cd00318">
    <property type="entry name" value="Phosphoglycerate_kinase"/>
    <property type="match status" value="1"/>
</dbReference>
<dbReference type="FunFam" id="3.40.50.1260:FF:000003">
    <property type="entry name" value="Phosphoglycerate kinase"/>
    <property type="match status" value="1"/>
</dbReference>
<dbReference type="FunFam" id="3.40.50.1260:FF:000006">
    <property type="entry name" value="Phosphoglycerate kinase"/>
    <property type="match status" value="1"/>
</dbReference>
<dbReference type="Gene3D" id="3.40.50.1260">
    <property type="entry name" value="Phosphoglycerate kinase, N-terminal domain"/>
    <property type="match status" value="2"/>
</dbReference>
<dbReference type="HAMAP" id="MF_00145">
    <property type="entry name" value="Phosphoglyc_kinase"/>
    <property type="match status" value="1"/>
</dbReference>
<dbReference type="InterPro" id="IPR001576">
    <property type="entry name" value="Phosphoglycerate_kinase"/>
</dbReference>
<dbReference type="InterPro" id="IPR015824">
    <property type="entry name" value="Phosphoglycerate_kinase_N"/>
</dbReference>
<dbReference type="InterPro" id="IPR036043">
    <property type="entry name" value="Phosphoglycerate_kinase_sf"/>
</dbReference>
<dbReference type="PANTHER" id="PTHR11406">
    <property type="entry name" value="PHOSPHOGLYCERATE KINASE"/>
    <property type="match status" value="1"/>
</dbReference>
<dbReference type="PANTHER" id="PTHR11406:SF23">
    <property type="entry name" value="PHOSPHOGLYCERATE KINASE 1, CHLOROPLASTIC-RELATED"/>
    <property type="match status" value="1"/>
</dbReference>
<dbReference type="Pfam" id="PF00162">
    <property type="entry name" value="PGK"/>
    <property type="match status" value="1"/>
</dbReference>
<dbReference type="PIRSF" id="PIRSF000724">
    <property type="entry name" value="Pgk"/>
    <property type="match status" value="1"/>
</dbReference>
<dbReference type="PRINTS" id="PR00477">
    <property type="entry name" value="PHGLYCKINASE"/>
</dbReference>
<dbReference type="SUPFAM" id="SSF53748">
    <property type="entry name" value="Phosphoglycerate kinase"/>
    <property type="match status" value="1"/>
</dbReference>
<comment type="catalytic activity">
    <reaction evidence="1">
        <text>(2R)-3-phosphoglycerate + ATP = (2R)-3-phospho-glyceroyl phosphate + ADP</text>
        <dbReference type="Rhea" id="RHEA:14801"/>
        <dbReference type="ChEBI" id="CHEBI:30616"/>
        <dbReference type="ChEBI" id="CHEBI:57604"/>
        <dbReference type="ChEBI" id="CHEBI:58272"/>
        <dbReference type="ChEBI" id="CHEBI:456216"/>
        <dbReference type="EC" id="2.7.2.3"/>
    </reaction>
</comment>
<comment type="pathway">
    <text evidence="1">Carbohydrate degradation; glycolysis; pyruvate from D-glyceraldehyde 3-phosphate: step 2/5.</text>
</comment>
<comment type="subunit">
    <text evidence="1">Monomer.</text>
</comment>
<comment type="subcellular location">
    <subcellularLocation>
        <location evidence="1">Cytoplasm</location>
    </subcellularLocation>
</comment>
<comment type="similarity">
    <text evidence="1">Belongs to the phosphoglycerate kinase family.</text>
</comment>
<name>PGK_GEOUR</name>